<organism>
    <name type="scientific">Mus musculus</name>
    <name type="common">Mouse</name>
    <dbReference type="NCBI Taxonomy" id="10090"/>
    <lineage>
        <taxon>Eukaryota</taxon>
        <taxon>Metazoa</taxon>
        <taxon>Chordata</taxon>
        <taxon>Craniata</taxon>
        <taxon>Vertebrata</taxon>
        <taxon>Euteleostomi</taxon>
        <taxon>Mammalia</taxon>
        <taxon>Eutheria</taxon>
        <taxon>Euarchontoglires</taxon>
        <taxon>Glires</taxon>
        <taxon>Rodentia</taxon>
        <taxon>Myomorpha</taxon>
        <taxon>Muroidea</taxon>
        <taxon>Muridae</taxon>
        <taxon>Murinae</taxon>
        <taxon>Mus</taxon>
        <taxon>Mus</taxon>
    </lineage>
</organism>
<accession>Q9CR89</accession>
<accession>B2KFC8</accession>
<accession>Q3UX13</accession>
<accession>Q9CWM6</accession>
<accession>Q9CYA2</accession>
<accession>Q9D4R1</accession>
<accession>Q9D8Z9</accession>
<feature type="chain" id="PRO_0000239384" description="Endoplasmic reticulum-Golgi intermediate compartment protein 2">
    <location>
        <begin position="1"/>
        <end position="377"/>
    </location>
</feature>
<feature type="topological domain" description="Cytoplasmic" evidence="3">
    <location>
        <begin position="1"/>
        <end position="33"/>
    </location>
</feature>
<feature type="transmembrane region" description="Helical" evidence="3">
    <location>
        <begin position="34"/>
        <end position="54"/>
    </location>
</feature>
<feature type="topological domain" description="Lumenal" evidence="3">
    <location>
        <begin position="55"/>
        <end position="319"/>
    </location>
</feature>
<feature type="transmembrane region" description="Helical" evidence="3">
    <location>
        <begin position="320"/>
        <end position="340"/>
    </location>
</feature>
<feature type="topological domain" description="Cytoplasmic" evidence="3">
    <location>
        <begin position="341"/>
        <end position="377"/>
    </location>
</feature>
<feature type="splice variant" id="VSP_019211" description="In isoform 2." evidence="4">
    <original>ERIINHAAGSHGVSGIFMKYDLSSLMV</original>
    <variation>RSLSKIQWEKQKNAVCKVYCVVAMTED</variation>
    <location>
        <begin position="276"/>
        <end position="302"/>
    </location>
</feature>
<feature type="splice variant" id="VSP_019212" description="In isoform 2." evidence="4">
    <location>
        <begin position="303"/>
        <end position="377"/>
    </location>
</feature>
<feature type="sequence conflict" description="In Ref. 3; BAB25070." evidence="5" ref="3">
    <original>R</original>
    <variation>G</variation>
    <location>
        <position position="3"/>
    </location>
</feature>
<feature type="sequence conflict" description="In Ref. 3; BAB30984." evidence="5" ref="3">
    <original>L</original>
    <variation>C</variation>
    <location>
        <position position="220"/>
    </location>
</feature>
<feature type="sequence conflict" description="In Ref. 3; BAB30984." evidence="5" ref="3">
    <original>V</original>
    <variation>M</variation>
    <location>
        <position position="254"/>
    </location>
</feature>
<feature type="sequence conflict" description="In Ref. 3; BAB30984." evidence="5" ref="3">
    <original>R</original>
    <variation>S</variation>
    <location>
        <position position="277"/>
    </location>
</feature>
<feature type="sequence conflict" description="In Ref. 3; BAB27008." evidence="5" ref="3">
    <original>E</original>
    <variation>D</variation>
    <location>
        <position position="341"/>
    </location>
</feature>
<dbReference type="EMBL" id="AK004661">
    <property type="protein sequence ID" value="BAB23451.1"/>
    <property type="molecule type" value="mRNA"/>
</dbReference>
<dbReference type="EMBL" id="AK007498">
    <property type="protein sequence ID" value="BAB25070.1"/>
    <property type="molecule type" value="mRNA"/>
</dbReference>
<dbReference type="EMBL" id="AK008971">
    <property type="protein sequence ID" value="BAB25998.1"/>
    <property type="molecule type" value="mRNA"/>
</dbReference>
<dbReference type="EMBL" id="AK009483">
    <property type="protein sequence ID" value="BAB26318.1"/>
    <property type="molecule type" value="mRNA"/>
</dbReference>
<dbReference type="EMBL" id="AK010529">
    <property type="protein sequence ID" value="BAB27008.1"/>
    <property type="molecule type" value="mRNA"/>
</dbReference>
<dbReference type="EMBL" id="AK016275">
    <property type="protein sequence ID" value="BAB30175.1"/>
    <property type="molecule type" value="mRNA"/>
</dbReference>
<dbReference type="EMBL" id="AK017876">
    <property type="protein sequence ID" value="BAB30984.1"/>
    <property type="molecule type" value="mRNA"/>
</dbReference>
<dbReference type="EMBL" id="AK030045">
    <property type="protein sequence ID" value="BAC26758.1"/>
    <property type="molecule type" value="mRNA"/>
</dbReference>
<dbReference type="EMBL" id="AK135968">
    <property type="protein sequence ID" value="BAE22750.1"/>
    <property type="molecule type" value="mRNA"/>
</dbReference>
<dbReference type="EMBL" id="AK167391">
    <property type="protein sequence ID" value="BAE39481.1"/>
    <property type="molecule type" value="mRNA"/>
</dbReference>
<dbReference type="EMBL" id="CU207318">
    <property type="status" value="NOT_ANNOTATED_CDS"/>
    <property type="molecule type" value="Genomic_DNA"/>
</dbReference>
<dbReference type="EMBL" id="BC006895">
    <property type="protein sequence ID" value="AAH06895.1"/>
    <property type="molecule type" value="mRNA"/>
</dbReference>
<dbReference type="EMBL" id="BC018188">
    <property type="protein sequence ID" value="AAH18188.1"/>
    <property type="molecule type" value="mRNA"/>
</dbReference>
<dbReference type="EMBL" id="BC026558">
    <property type="protein sequence ID" value="AAH26558.1"/>
    <property type="molecule type" value="mRNA"/>
</dbReference>
<dbReference type="EMBL" id="BC064749">
    <property type="protein sequence ID" value="AAH64749.1"/>
    <property type="molecule type" value="mRNA"/>
</dbReference>
<dbReference type="CCDS" id="CCDS20708.1">
    <molecule id="Q9CR89-1"/>
</dbReference>
<dbReference type="RefSeq" id="NP_001273489.1">
    <property type="nucleotide sequence ID" value="NM_001286560.1"/>
</dbReference>
<dbReference type="RefSeq" id="NP_080444.1">
    <molecule id="Q9CR89-1"/>
    <property type="nucleotide sequence ID" value="NM_026168.4"/>
</dbReference>
<dbReference type="RefSeq" id="XP_006507150.1">
    <property type="nucleotide sequence ID" value="XM_006507087.2"/>
</dbReference>
<dbReference type="RefSeq" id="XP_017177205.1">
    <molecule id="Q9CR89-1"/>
    <property type="nucleotide sequence ID" value="XM_017321716.3"/>
</dbReference>
<dbReference type="RefSeq" id="XP_017177206.1">
    <molecule id="Q9CR89-2"/>
    <property type="nucleotide sequence ID" value="XM_017321717.1"/>
</dbReference>
<dbReference type="SMR" id="Q9CR89"/>
<dbReference type="BioGRID" id="212200">
    <property type="interactions" value="3"/>
</dbReference>
<dbReference type="FunCoup" id="Q9CR89">
    <property type="interactions" value="2513"/>
</dbReference>
<dbReference type="IntAct" id="Q9CR89">
    <property type="interactions" value="1"/>
</dbReference>
<dbReference type="MINT" id="Q9CR89"/>
<dbReference type="STRING" id="10090.ENSMUSP00000120456"/>
<dbReference type="GlyConnect" id="2284">
    <property type="glycosylation" value="1 N-Linked glycan (1 site)"/>
</dbReference>
<dbReference type="GlyGen" id="Q9CR89">
    <property type="glycosylation" value="1 site, 1 N-linked glycan (1 site)"/>
</dbReference>
<dbReference type="iPTMnet" id="Q9CR89"/>
<dbReference type="PhosphoSitePlus" id="Q9CR89"/>
<dbReference type="SwissPalm" id="Q9CR89"/>
<dbReference type="PaxDb" id="10090-ENSMUSP00000120456"/>
<dbReference type="PeptideAtlas" id="Q9CR89"/>
<dbReference type="ProteomicsDB" id="275771">
    <molecule id="Q9CR89-1"/>
</dbReference>
<dbReference type="ProteomicsDB" id="275772">
    <molecule id="Q9CR89-2"/>
</dbReference>
<dbReference type="Pumba" id="Q9CR89"/>
<dbReference type="Antibodypedia" id="7205">
    <property type="antibodies" value="202 antibodies from 28 providers"/>
</dbReference>
<dbReference type="DNASU" id="67456"/>
<dbReference type="Ensembl" id="ENSMUST00000136008.8">
    <molecule id="Q9CR89-1"/>
    <property type="protein sequence ID" value="ENSMUSP00000120456.2"/>
    <property type="gene ID" value="ENSMUSG00000030304.12"/>
</dbReference>
<dbReference type="GeneID" id="67456"/>
<dbReference type="KEGG" id="mmu:67456"/>
<dbReference type="UCSC" id="uc009etd.1">
    <molecule id="Q9CR89-1"/>
    <property type="organism name" value="mouse"/>
</dbReference>
<dbReference type="UCSC" id="uc009etg.1">
    <molecule id="Q9CR89-2"/>
    <property type="organism name" value="mouse"/>
</dbReference>
<dbReference type="AGR" id="MGI:1914706"/>
<dbReference type="CTD" id="51290"/>
<dbReference type="MGI" id="MGI:1914706">
    <property type="gene designation" value="Ergic2"/>
</dbReference>
<dbReference type="VEuPathDB" id="HostDB:ENSMUSG00000030304"/>
<dbReference type="eggNOG" id="KOG2667">
    <property type="taxonomic scope" value="Eukaryota"/>
</dbReference>
<dbReference type="GeneTree" id="ENSGT00530000063113"/>
<dbReference type="HOGENOM" id="CLU_034705_4_1_1"/>
<dbReference type="InParanoid" id="Q9CR89"/>
<dbReference type="OMA" id="MTNHYLR"/>
<dbReference type="OrthoDB" id="5541786at2759"/>
<dbReference type="PhylomeDB" id="Q9CR89"/>
<dbReference type="TreeFam" id="TF317192"/>
<dbReference type="BioGRID-ORCS" id="67456">
    <property type="hits" value="2 hits in 77 CRISPR screens"/>
</dbReference>
<dbReference type="ChiTaRS" id="Ergic2">
    <property type="organism name" value="mouse"/>
</dbReference>
<dbReference type="PRO" id="PR:Q9CR89"/>
<dbReference type="Proteomes" id="UP000000589">
    <property type="component" value="Chromosome 6"/>
</dbReference>
<dbReference type="RNAct" id="Q9CR89">
    <property type="molecule type" value="protein"/>
</dbReference>
<dbReference type="Bgee" id="ENSMUSG00000030304">
    <property type="expression patterns" value="Expressed in seminal vesicle and 272 other cell types or tissues"/>
</dbReference>
<dbReference type="ExpressionAtlas" id="Q9CR89">
    <property type="expression patterns" value="baseline and differential"/>
</dbReference>
<dbReference type="GO" id="GO:0005789">
    <property type="term" value="C:endoplasmic reticulum membrane"/>
    <property type="evidence" value="ECO:0007669"/>
    <property type="project" value="UniProtKB-SubCell"/>
</dbReference>
<dbReference type="GO" id="GO:0005793">
    <property type="term" value="C:endoplasmic reticulum-Golgi intermediate compartment"/>
    <property type="evidence" value="ECO:0000250"/>
    <property type="project" value="HGNC-UCL"/>
</dbReference>
<dbReference type="GO" id="GO:0033116">
    <property type="term" value="C:endoplasmic reticulum-Golgi intermediate compartment membrane"/>
    <property type="evidence" value="ECO:0007669"/>
    <property type="project" value="UniProtKB-SubCell"/>
</dbReference>
<dbReference type="GO" id="GO:0005794">
    <property type="term" value="C:Golgi apparatus"/>
    <property type="evidence" value="ECO:0007669"/>
    <property type="project" value="UniProtKB-SubCell"/>
</dbReference>
<dbReference type="GO" id="GO:0005730">
    <property type="term" value="C:nucleolus"/>
    <property type="evidence" value="ECO:0007669"/>
    <property type="project" value="Ensembl"/>
</dbReference>
<dbReference type="GO" id="GO:0061852">
    <property type="term" value="C:retrograde transporter complex, Golgi to ER"/>
    <property type="evidence" value="ECO:0007669"/>
    <property type="project" value="Ensembl"/>
</dbReference>
<dbReference type="GO" id="GO:0006888">
    <property type="term" value="P:endoplasmic reticulum to Golgi vesicle-mediated transport"/>
    <property type="evidence" value="ECO:0000250"/>
    <property type="project" value="HGNC-UCL"/>
</dbReference>
<dbReference type="GO" id="GO:0006890">
    <property type="term" value="P:retrograde vesicle-mediated transport, Golgi to endoplasmic reticulum"/>
    <property type="evidence" value="ECO:0007669"/>
    <property type="project" value="Ensembl"/>
</dbReference>
<dbReference type="InterPro" id="IPR045888">
    <property type="entry name" value="Erv"/>
</dbReference>
<dbReference type="InterPro" id="IPR012936">
    <property type="entry name" value="Erv_C"/>
</dbReference>
<dbReference type="InterPro" id="IPR039542">
    <property type="entry name" value="Erv_N"/>
</dbReference>
<dbReference type="PANTHER" id="PTHR10984">
    <property type="entry name" value="ENDOPLASMIC RETICULUM-GOLGI INTERMEDIATE COMPARTMENT PROTEIN"/>
    <property type="match status" value="1"/>
</dbReference>
<dbReference type="PANTHER" id="PTHR10984:SF30">
    <property type="entry name" value="ENDOPLASMIC RETICULUM-GOLGI INTERMEDIATE COMPARTMENT PROTEIN 2"/>
    <property type="match status" value="1"/>
</dbReference>
<dbReference type="Pfam" id="PF07970">
    <property type="entry name" value="COPIIcoated_ERV"/>
    <property type="match status" value="1"/>
</dbReference>
<dbReference type="Pfam" id="PF13850">
    <property type="entry name" value="ERGIC_N"/>
    <property type="match status" value="1"/>
</dbReference>
<proteinExistence type="evidence at protein level"/>
<reference key="1">
    <citation type="journal article" date="2005" name="Science">
        <title>The transcriptional landscape of the mammalian genome.</title>
        <authorList>
            <person name="Carninci P."/>
            <person name="Kasukawa T."/>
            <person name="Katayama S."/>
            <person name="Gough J."/>
            <person name="Frith M.C."/>
            <person name="Maeda N."/>
            <person name="Oyama R."/>
            <person name="Ravasi T."/>
            <person name="Lenhard B."/>
            <person name="Wells C."/>
            <person name="Kodzius R."/>
            <person name="Shimokawa K."/>
            <person name="Bajic V.B."/>
            <person name="Brenner S.E."/>
            <person name="Batalov S."/>
            <person name="Forrest A.R."/>
            <person name="Zavolan M."/>
            <person name="Davis M.J."/>
            <person name="Wilming L.G."/>
            <person name="Aidinis V."/>
            <person name="Allen J.E."/>
            <person name="Ambesi-Impiombato A."/>
            <person name="Apweiler R."/>
            <person name="Aturaliya R.N."/>
            <person name="Bailey T.L."/>
            <person name="Bansal M."/>
            <person name="Baxter L."/>
            <person name="Beisel K.W."/>
            <person name="Bersano T."/>
            <person name="Bono H."/>
            <person name="Chalk A.M."/>
            <person name="Chiu K.P."/>
            <person name="Choudhary V."/>
            <person name="Christoffels A."/>
            <person name="Clutterbuck D.R."/>
            <person name="Crowe M.L."/>
            <person name="Dalla E."/>
            <person name="Dalrymple B.P."/>
            <person name="de Bono B."/>
            <person name="Della Gatta G."/>
            <person name="di Bernardo D."/>
            <person name="Down T."/>
            <person name="Engstrom P."/>
            <person name="Fagiolini M."/>
            <person name="Faulkner G."/>
            <person name="Fletcher C.F."/>
            <person name="Fukushima T."/>
            <person name="Furuno M."/>
            <person name="Futaki S."/>
            <person name="Gariboldi M."/>
            <person name="Georgii-Hemming P."/>
            <person name="Gingeras T.R."/>
            <person name="Gojobori T."/>
            <person name="Green R.E."/>
            <person name="Gustincich S."/>
            <person name="Harbers M."/>
            <person name="Hayashi Y."/>
            <person name="Hensch T.K."/>
            <person name="Hirokawa N."/>
            <person name="Hill D."/>
            <person name="Huminiecki L."/>
            <person name="Iacono M."/>
            <person name="Ikeo K."/>
            <person name="Iwama A."/>
            <person name="Ishikawa T."/>
            <person name="Jakt M."/>
            <person name="Kanapin A."/>
            <person name="Katoh M."/>
            <person name="Kawasawa Y."/>
            <person name="Kelso J."/>
            <person name="Kitamura H."/>
            <person name="Kitano H."/>
            <person name="Kollias G."/>
            <person name="Krishnan S.P."/>
            <person name="Kruger A."/>
            <person name="Kummerfeld S.K."/>
            <person name="Kurochkin I.V."/>
            <person name="Lareau L.F."/>
            <person name="Lazarevic D."/>
            <person name="Lipovich L."/>
            <person name="Liu J."/>
            <person name="Liuni S."/>
            <person name="McWilliam S."/>
            <person name="Madan Babu M."/>
            <person name="Madera M."/>
            <person name="Marchionni L."/>
            <person name="Matsuda H."/>
            <person name="Matsuzawa S."/>
            <person name="Miki H."/>
            <person name="Mignone F."/>
            <person name="Miyake S."/>
            <person name="Morris K."/>
            <person name="Mottagui-Tabar S."/>
            <person name="Mulder N."/>
            <person name="Nakano N."/>
            <person name="Nakauchi H."/>
            <person name="Ng P."/>
            <person name="Nilsson R."/>
            <person name="Nishiguchi S."/>
            <person name="Nishikawa S."/>
            <person name="Nori F."/>
            <person name="Ohara O."/>
            <person name="Okazaki Y."/>
            <person name="Orlando V."/>
            <person name="Pang K.C."/>
            <person name="Pavan W.J."/>
            <person name="Pavesi G."/>
            <person name="Pesole G."/>
            <person name="Petrovsky N."/>
            <person name="Piazza S."/>
            <person name="Reed J."/>
            <person name="Reid J.F."/>
            <person name="Ring B.Z."/>
            <person name="Ringwald M."/>
            <person name="Rost B."/>
            <person name="Ruan Y."/>
            <person name="Salzberg S.L."/>
            <person name="Sandelin A."/>
            <person name="Schneider C."/>
            <person name="Schoenbach C."/>
            <person name="Sekiguchi K."/>
            <person name="Semple C.A."/>
            <person name="Seno S."/>
            <person name="Sessa L."/>
            <person name="Sheng Y."/>
            <person name="Shibata Y."/>
            <person name="Shimada H."/>
            <person name="Shimada K."/>
            <person name="Silva D."/>
            <person name="Sinclair B."/>
            <person name="Sperling S."/>
            <person name="Stupka E."/>
            <person name="Sugiura K."/>
            <person name="Sultana R."/>
            <person name="Takenaka Y."/>
            <person name="Taki K."/>
            <person name="Tammoja K."/>
            <person name="Tan S.L."/>
            <person name="Tang S."/>
            <person name="Taylor M.S."/>
            <person name="Tegner J."/>
            <person name="Teichmann S.A."/>
            <person name="Ueda H.R."/>
            <person name="van Nimwegen E."/>
            <person name="Verardo R."/>
            <person name="Wei C.L."/>
            <person name="Yagi K."/>
            <person name="Yamanishi H."/>
            <person name="Zabarovsky E."/>
            <person name="Zhu S."/>
            <person name="Zimmer A."/>
            <person name="Hide W."/>
            <person name="Bult C."/>
            <person name="Grimmond S.M."/>
            <person name="Teasdale R.D."/>
            <person name="Liu E.T."/>
            <person name="Brusic V."/>
            <person name="Quackenbush J."/>
            <person name="Wahlestedt C."/>
            <person name="Mattick J.S."/>
            <person name="Hume D.A."/>
            <person name="Kai C."/>
            <person name="Sasaki D."/>
            <person name="Tomaru Y."/>
            <person name="Fukuda S."/>
            <person name="Kanamori-Katayama M."/>
            <person name="Suzuki M."/>
            <person name="Aoki J."/>
            <person name="Arakawa T."/>
            <person name="Iida J."/>
            <person name="Imamura K."/>
            <person name="Itoh M."/>
            <person name="Kato T."/>
            <person name="Kawaji H."/>
            <person name="Kawagashira N."/>
            <person name="Kawashima T."/>
            <person name="Kojima M."/>
            <person name="Kondo S."/>
            <person name="Konno H."/>
            <person name="Nakano K."/>
            <person name="Ninomiya N."/>
            <person name="Nishio T."/>
            <person name="Okada M."/>
            <person name="Plessy C."/>
            <person name="Shibata K."/>
            <person name="Shiraki T."/>
            <person name="Suzuki S."/>
            <person name="Tagami M."/>
            <person name="Waki K."/>
            <person name="Watahiki A."/>
            <person name="Okamura-Oho Y."/>
            <person name="Suzuki H."/>
            <person name="Kawai J."/>
            <person name="Hayashizaki Y."/>
        </authorList>
    </citation>
    <scope>NUCLEOTIDE SEQUENCE [LARGE SCALE MRNA] (ISOFORMS 1 AND 2)</scope>
    <source>
        <strain>C57BL/6J</strain>
        <tissue>Egg</tissue>
        <tissue>Embryo</tissue>
        <tissue>Lung</tissue>
        <tissue>Placenta</tissue>
        <tissue>Stomach</tissue>
        <tissue>Testis</tissue>
        <tissue>Tongue</tissue>
    </source>
</reference>
<reference key="2">
    <citation type="journal article" date="2009" name="PLoS Biol.">
        <title>Lineage-specific biology revealed by a finished genome assembly of the mouse.</title>
        <authorList>
            <person name="Church D.M."/>
            <person name="Goodstadt L."/>
            <person name="Hillier L.W."/>
            <person name="Zody M.C."/>
            <person name="Goldstein S."/>
            <person name="She X."/>
            <person name="Bult C.J."/>
            <person name="Agarwala R."/>
            <person name="Cherry J.L."/>
            <person name="DiCuccio M."/>
            <person name="Hlavina W."/>
            <person name="Kapustin Y."/>
            <person name="Meric P."/>
            <person name="Maglott D."/>
            <person name="Birtle Z."/>
            <person name="Marques A.C."/>
            <person name="Graves T."/>
            <person name="Zhou S."/>
            <person name="Teague B."/>
            <person name="Potamousis K."/>
            <person name="Churas C."/>
            <person name="Place M."/>
            <person name="Herschleb J."/>
            <person name="Runnheim R."/>
            <person name="Forrest D."/>
            <person name="Amos-Landgraf J."/>
            <person name="Schwartz D.C."/>
            <person name="Cheng Z."/>
            <person name="Lindblad-Toh K."/>
            <person name="Eichler E.E."/>
            <person name="Ponting C.P."/>
        </authorList>
    </citation>
    <scope>NUCLEOTIDE SEQUENCE [LARGE SCALE GENOMIC DNA]</scope>
    <source>
        <strain>C57BL/6J</strain>
    </source>
</reference>
<reference key="3">
    <citation type="journal article" date="2004" name="Genome Res.">
        <title>The status, quality, and expansion of the NIH full-length cDNA project: the Mammalian Gene Collection (MGC).</title>
        <authorList>
            <consortium name="The MGC Project Team"/>
        </authorList>
    </citation>
    <scope>NUCLEOTIDE SEQUENCE [LARGE SCALE MRNA] (ISOFORM 1)</scope>
    <source>
        <strain>C57BL/6J</strain>
        <strain>Czech II</strain>
        <strain>FVB/N</strain>
        <tissue>Egg</tissue>
        <tissue>Mammary tumor</tissue>
    </source>
</reference>
<reference key="4">
    <citation type="journal article" date="2010" name="Cell">
        <title>A tissue-specific atlas of mouse protein phosphorylation and expression.</title>
        <authorList>
            <person name="Huttlin E.L."/>
            <person name="Jedrychowski M.P."/>
            <person name="Elias J.E."/>
            <person name="Goswami T."/>
            <person name="Rad R."/>
            <person name="Beausoleil S.A."/>
            <person name="Villen J."/>
            <person name="Haas W."/>
            <person name="Sowa M.E."/>
            <person name="Gygi S.P."/>
        </authorList>
    </citation>
    <scope>IDENTIFICATION BY MASS SPECTROMETRY [LARGE SCALE ANALYSIS]</scope>
    <source>
        <tissue>Pancreas</tissue>
        <tissue>Spleen</tissue>
    </source>
</reference>
<keyword id="KW-0025">Alternative splicing</keyword>
<keyword id="KW-0963">Cytoplasm</keyword>
<keyword id="KW-0256">Endoplasmic reticulum</keyword>
<keyword id="KW-0931">ER-Golgi transport</keyword>
<keyword id="KW-0333">Golgi apparatus</keyword>
<keyword id="KW-0472">Membrane</keyword>
<keyword id="KW-0539">Nucleus</keyword>
<keyword id="KW-1185">Reference proteome</keyword>
<keyword id="KW-0812">Transmembrane</keyword>
<keyword id="KW-1133">Transmembrane helix</keyword>
<keyword id="KW-0813">Transport</keyword>
<protein>
    <recommendedName>
        <fullName>Endoplasmic reticulum-Golgi intermediate compartment protein 2</fullName>
    </recommendedName>
</protein>
<gene>
    <name type="primary">Ergic2</name>
</gene>
<name>ERGI2_MOUSE</name>
<sequence length="377" mass="42482">MRRLNRRKTLSLVKELDAFPKVPDSYVETSASGGTVSLIAFTTMALLTIMEFSVYQDTWMKYEYEVDKDFSSKLRINIDITVAMKCHYVGADVLDLAETMVASADGLAYEPALFDLSPQQREWQRMLQLIQSRLQEEHSLQDVIFKSAFKSASTALPPREDDSSLTPDACRIHGHLYVNKVAGNFHITVGKAIPHPRGHAHLAALVNHDSYNFSHRIDHLSFGELVPGIINPLDGTEKIAVDHNQMFQYFITVVPTKLHTYKISADTHQFSVTERERIINHAAGSHGVSGIFMKYDLSSLMVTVTEEHMPFWQFFVRLCGIIGGIFSTTGMLHGIGKFIVEIICCRFRLGSYKPVRSVPFADGHTDNHLPLLENNTH</sequence>
<evidence type="ECO:0000250" key="1"/>
<evidence type="ECO:0000250" key="2">
    <source>
        <dbReference type="UniProtKB" id="Q96RQ1"/>
    </source>
</evidence>
<evidence type="ECO:0000255" key="3"/>
<evidence type="ECO:0000303" key="4">
    <source>
    </source>
</evidence>
<evidence type="ECO:0000305" key="5"/>
<comment type="function">
    <text evidence="1">Possible role in transport between endoplasmic reticulum and Golgi.</text>
</comment>
<comment type="subunit">
    <text evidence="2">May form a heteromeric complex composed of ERGIC1, ERGIC2 and ERGIC3 (By similarity). Interacts with ERGIC3, the interaction is required for the stable expression of both proteins (By similarity). May interact with EEF1A1 (By similarity).</text>
</comment>
<comment type="interaction">
    <interactant intactId="EBI-30868772">
        <id>Q9CR89</id>
    </interactant>
    <interactant intactId="EBI-1768732">
        <id>Q9ESF1</id>
        <label>Otof</label>
    </interactant>
    <organismsDiffer>false</organismsDiffer>
    <experiments>3</experiments>
</comment>
<comment type="subcellular location">
    <subcellularLocation>
        <location evidence="1">Endoplasmic reticulum-Golgi intermediate compartment membrane</location>
        <topology evidence="1">Multi-pass membrane protein</topology>
    </subcellularLocation>
    <subcellularLocation>
        <location evidence="1">Golgi apparatus</location>
        <location evidence="1">cis-Golgi network membrane</location>
        <topology evidence="1">Multi-pass membrane protein</topology>
    </subcellularLocation>
    <subcellularLocation>
        <location evidence="1">Endoplasmic reticulum membrane</location>
        <topology evidence="1">Multi-pass membrane protein</topology>
    </subcellularLocation>
    <subcellularLocation>
        <location evidence="1">Cytoplasm</location>
    </subcellularLocation>
    <subcellularLocation>
        <location evidence="1">Nucleus</location>
    </subcellularLocation>
    <text>Cycles between the endoplasmic reticulum and the Golgi.</text>
</comment>
<comment type="alternative products">
    <event type="alternative splicing"/>
    <isoform>
        <id>Q9CR89-1</id>
        <name>1</name>
        <sequence type="displayed"/>
    </isoform>
    <isoform>
        <id>Q9CR89-2</id>
        <name>2</name>
        <sequence type="described" ref="VSP_019211 VSP_019212"/>
    </isoform>
</comment>
<comment type="similarity">
    <text evidence="5">Belongs to the ERGIC family.</text>
</comment>